<feature type="chain" id="PRO_1000130763" description="Nucleotide-binding protein HSM_1595">
    <location>
        <begin position="1"/>
        <end position="286"/>
    </location>
</feature>
<feature type="binding site" evidence="1">
    <location>
        <begin position="8"/>
        <end position="15"/>
    </location>
    <ligand>
        <name>ATP</name>
        <dbReference type="ChEBI" id="CHEBI:30616"/>
    </ligand>
</feature>
<feature type="binding site" evidence="1">
    <location>
        <begin position="56"/>
        <end position="59"/>
    </location>
    <ligand>
        <name>GTP</name>
        <dbReference type="ChEBI" id="CHEBI:37565"/>
    </ligand>
</feature>
<sequence length="286" mass="33121">MEIIIISGRSGAGKSVALRALEDIGYYCVDNLTMDLVPQLVDMLENKQHLVAISLDIRNLPQEPETLDHILNLLQEKYPVKIIFLDTDRNTLIRRYSDSRRLHPLSVQNLSLEAAIAAEKEHLEPLVQHANVIIDTTPLSPHELAERLREFLRGNTEKELQIIVESFGFKYGIPLDADYVFDVRFLPNPHWNQELRPMTGLEKPVIEFMQKHIEVDNFIYQTRNYIENWLPMLEKNNRSYLTIAIGCTGGKHRSVYIAQQIGEYFRAKGKKVQIQHKSLEKHTQNK</sequence>
<organism>
    <name type="scientific">Histophilus somni (strain 2336)</name>
    <name type="common">Haemophilus somnus</name>
    <dbReference type="NCBI Taxonomy" id="228400"/>
    <lineage>
        <taxon>Bacteria</taxon>
        <taxon>Pseudomonadati</taxon>
        <taxon>Pseudomonadota</taxon>
        <taxon>Gammaproteobacteria</taxon>
        <taxon>Pasteurellales</taxon>
        <taxon>Pasteurellaceae</taxon>
        <taxon>Histophilus</taxon>
    </lineage>
</organism>
<dbReference type="EMBL" id="CP000947">
    <property type="protein sequence ID" value="ACA31357.1"/>
    <property type="molecule type" value="Genomic_DNA"/>
</dbReference>
<dbReference type="RefSeq" id="WP_011609333.1">
    <property type="nucleotide sequence ID" value="NC_010519.1"/>
</dbReference>
<dbReference type="SMR" id="B0UV71"/>
<dbReference type="STRING" id="228400.HSM_1595"/>
<dbReference type="GeneID" id="31487898"/>
<dbReference type="KEGG" id="hsm:HSM_1595"/>
<dbReference type="HOGENOM" id="CLU_059558_1_1_6"/>
<dbReference type="GO" id="GO:0005524">
    <property type="term" value="F:ATP binding"/>
    <property type="evidence" value="ECO:0007669"/>
    <property type="project" value="UniProtKB-UniRule"/>
</dbReference>
<dbReference type="GO" id="GO:0005525">
    <property type="term" value="F:GTP binding"/>
    <property type="evidence" value="ECO:0007669"/>
    <property type="project" value="UniProtKB-UniRule"/>
</dbReference>
<dbReference type="Gene3D" id="3.40.50.300">
    <property type="entry name" value="P-loop containing nucleotide triphosphate hydrolases"/>
    <property type="match status" value="1"/>
</dbReference>
<dbReference type="HAMAP" id="MF_00636">
    <property type="entry name" value="RapZ_like"/>
    <property type="match status" value="1"/>
</dbReference>
<dbReference type="InterPro" id="IPR027417">
    <property type="entry name" value="P-loop_NTPase"/>
</dbReference>
<dbReference type="InterPro" id="IPR005337">
    <property type="entry name" value="RapZ-like"/>
</dbReference>
<dbReference type="InterPro" id="IPR053930">
    <property type="entry name" value="RapZ-like_N"/>
</dbReference>
<dbReference type="InterPro" id="IPR053931">
    <property type="entry name" value="RapZ_C"/>
</dbReference>
<dbReference type="NCBIfam" id="NF003828">
    <property type="entry name" value="PRK05416.1"/>
    <property type="match status" value="1"/>
</dbReference>
<dbReference type="PANTHER" id="PTHR30448">
    <property type="entry name" value="RNASE ADAPTER PROTEIN RAPZ"/>
    <property type="match status" value="1"/>
</dbReference>
<dbReference type="PANTHER" id="PTHR30448:SF0">
    <property type="entry name" value="RNASE ADAPTER PROTEIN RAPZ"/>
    <property type="match status" value="1"/>
</dbReference>
<dbReference type="Pfam" id="PF22740">
    <property type="entry name" value="PapZ_C"/>
    <property type="match status" value="1"/>
</dbReference>
<dbReference type="Pfam" id="PF03668">
    <property type="entry name" value="RapZ-like_N"/>
    <property type="match status" value="1"/>
</dbReference>
<dbReference type="PIRSF" id="PIRSF005052">
    <property type="entry name" value="P-loopkin"/>
    <property type="match status" value="1"/>
</dbReference>
<dbReference type="SUPFAM" id="SSF52540">
    <property type="entry name" value="P-loop containing nucleoside triphosphate hydrolases"/>
    <property type="match status" value="1"/>
</dbReference>
<protein>
    <recommendedName>
        <fullName evidence="1">Nucleotide-binding protein HSM_1595</fullName>
    </recommendedName>
</protein>
<accession>B0UV71</accession>
<gene>
    <name type="ordered locus">HSM_1595</name>
</gene>
<evidence type="ECO:0000255" key="1">
    <source>
        <dbReference type="HAMAP-Rule" id="MF_00636"/>
    </source>
</evidence>
<name>Y1595_HISS2</name>
<comment type="function">
    <text evidence="1">Displays ATPase and GTPase activities.</text>
</comment>
<comment type="similarity">
    <text evidence="1">Belongs to the RapZ-like family.</text>
</comment>
<proteinExistence type="inferred from homology"/>
<reference key="1">
    <citation type="submission" date="2008-02" db="EMBL/GenBank/DDBJ databases">
        <title>Complete sequence of Haemophilus somnus 2336.</title>
        <authorList>
            <consortium name="US DOE Joint Genome Institute"/>
            <person name="Siddaramappa S."/>
            <person name="Duncan A.J."/>
            <person name="Challacombe J.F."/>
            <person name="Rainey D."/>
            <person name="Gillaspy A.F."/>
            <person name="Carson M."/>
            <person name="Gipson J."/>
            <person name="Gipson M."/>
            <person name="Bruce D."/>
            <person name="Detter J.C."/>
            <person name="Han C.S."/>
            <person name="Land M."/>
            <person name="Tapia R."/>
            <person name="Thompson L.S."/>
            <person name="Orvis J."/>
            <person name="Zaitshik J."/>
            <person name="Barnes G."/>
            <person name="Brettin T.S."/>
            <person name="Dyer D.W."/>
            <person name="Inzana T.J."/>
        </authorList>
    </citation>
    <scope>NUCLEOTIDE SEQUENCE [LARGE SCALE GENOMIC DNA]</scope>
    <source>
        <strain>2336</strain>
    </source>
</reference>
<keyword id="KW-0067">ATP-binding</keyword>
<keyword id="KW-0342">GTP-binding</keyword>
<keyword id="KW-0547">Nucleotide-binding</keyword>